<organism>
    <name type="scientific">Salmonella paratyphi C (strain RKS4594)</name>
    <dbReference type="NCBI Taxonomy" id="476213"/>
    <lineage>
        <taxon>Bacteria</taxon>
        <taxon>Pseudomonadati</taxon>
        <taxon>Pseudomonadota</taxon>
        <taxon>Gammaproteobacteria</taxon>
        <taxon>Enterobacterales</taxon>
        <taxon>Enterobacteriaceae</taxon>
        <taxon>Salmonella</taxon>
    </lineage>
</organism>
<dbReference type="EC" id="2.7.1.30" evidence="1"/>
<dbReference type="EMBL" id="CP000857">
    <property type="protein sequence ID" value="ACN48255.1"/>
    <property type="molecule type" value="Genomic_DNA"/>
</dbReference>
<dbReference type="RefSeq" id="WP_000136809.1">
    <property type="nucleotide sequence ID" value="NC_012125.1"/>
</dbReference>
<dbReference type="SMR" id="C0Q436"/>
<dbReference type="KEGG" id="sei:SPC_4192"/>
<dbReference type="HOGENOM" id="CLU_009281_2_3_6"/>
<dbReference type="UniPathway" id="UPA00618">
    <property type="reaction ID" value="UER00672"/>
</dbReference>
<dbReference type="Proteomes" id="UP000001599">
    <property type="component" value="Chromosome"/>
</dbReference>
<dbReference type="GO" id="GO:0005829">
    <property type="term" value="C:cytosol"/>
    <property type="evidence" value="ECO:0007669"/>
    <property type="project" value="TreeGrafter"/>
</dbReference>
<dbReference type="GO" id="GO:0005524">
    <property type="term" value="F:ATP binding"/>
    <property type="evidence" value="ECO:0007669"/>
    <property type="project" value="UniProtKB-UniRule"/>
</dbReference>
<dbReference type="GO" id="GO:0004370">
    <property type="term" value="F:glycerol kinase activity"/>
    <property type="evidence" value="ECO:0000250"/>
    <property type="project" value="UniProtKB"/>
</dbReference>
<dbReference type="GO" id="GO:0046872">
    <property type="term" value="F:metal ion binding"/>
    <property type="evidence" value="ECO:0007669"/>
    <property type="project" value="UniProtKB-KW"/>
</dbReference>
<dbReference type="GO" id="GO:0019563">
    <property type="term" value="P:glycerol catabolic process"/>
    <property type="evidence" value="ECO:0007669"/>
    <property type="project" value="UniProtKB-UniRule"/>
</dbReference>
<dbReference type="GO" id="GO:0006071">
    <property type="term" value="P:glycerol metabolic process"/>
    <property type="evidence" value="ECO:0000250"/>
    <property type="project" value="UniProtKB"/>
</dbReference>
<dbReference type="GO" id="GO:0006072">
    <property type="term" value="P:glycerol-3-phosphate metabolic process"/>
    <property type="evidence" value="ECO:0007669"/>
    <property type="project" value="InterPro"/>
</dbReference>
<dbReference type="CDD" id="cd07786">
    <property type="entry name" value="FGGY_EcGK_like"/>
    <property type="match status" value="1"/>
</dbReference>
<dbReference type="FunFam" id="3.30.420.40:FF:000007">
    <property type="entry name" value="Glycerol kinase"/>
    <property type="match status" value="1"/>
</dbReference>
<dbReference type="FunFam" id="3.30.420.40:FF:000008">
    <property type="entry name" value="Glycerol kinase"/>
    <property type="match status" value="1"/>
</dbReference>
<dbReference type="Gene3D" id="3.30.420.40">
    <property type="match status" value="2"/>
</dbReference>
<dbReference type="HAMAP" id="MF_00186">
    <property type="entry name" value="Glycerol_kin"/>
    <property type="match status" value="1"/>
</dbReference>
<dbReference type="InterPro" id="IPR043129">
    <property type="entry name" value="ATPase_NBD"/>
</dbReference>
<dbReference type="InterPro" id="IPR000577">
    <property type="entry name" value="Carb_kinase_FGGY"/>
</dbReference>
<dbReference type="InterPro" id="IPR018483">
    <property type="entry name" value="Carb_kinase_FGGY_CS"/>
</dbReference>
<dbReference type="InterPro" id="IPR018485">
    <property type="entry name" value="FGGY_C"/>
</dbReference>
<dbReference type="InterPro" id="IPR018484">
    <property type="entry name" value="FGGY_N"/>
</dbReference>
<dbReference type="InterPro" id="IPR005999">
    <property type="entry name" value="Glycerol_kin"/>
</dbReference>
<dbReference type="NCBIfam" id="TIGR01311">
    <property type="entry name" value="glycerol_kin"/>
    <property type="match status" value="1"/>
</dbReference>
<dbReference type="NCBIfam" id="NF000756">
    <property type="entry name" value="PRK00047.1"/>
    <property type="match status" value="1"/>
</dbReference>
<dbReference type="PANTHER" id="PTHR10196:SF69">
    <property type="entry name" value="GLYCEROL KINASE"/>
    <property type="match status" value="1"/>
</dbReference>
<dbReference type="PANTHER" id="PTHR10196">
    <property type="entry name" value="SUGAR KINASE"/>
    <property type="match status" value="1"/>
</dbReference>
<dbReference type="Pfam" id="PF02782">
    <property type="entry name" value="FGGY_C"/>
    <property type="match status" value="1"/>
</dbReference>
<dbReference type="Pfam" id="PF00370">
    <property type="entry name" value="FGGY_N"/>
    <property type="match status" value="1"/>
</dbReference>
<dbReference type="PIRSF" id="PIRSF000538">
    <property type="entry name" value="GlpK"/>
    <property type="match status" value="1"/>
</dbReference>
<dbReference type="SUPFAM" id="SSF53067">
    <property type="entry name" value="Actin-like ATPase domain"/>
    <property type="match status" value="2"/>
</dbReference>
<dbReference type="PROSITE" id="PS00933">
    <property type="entry name" value="FGGY_KINASES_1"/>
    <property type="match status" value="1"/>
</dbReference>
<dbReference type="PROSITE" id="PS00445">
    <property type="entry name" value="FGGY_KINASES_2"/>
    <property type="match status" value="1"/>
</dbReference>
<gene>
    <name evidence="1" type="primary">glpK</name>
    <name type="ordered locus">SPC_4192</name>
</gene>
<proteinExistence type="inferred from homology"/>
<sequence>MTEKKYIVALDQGTTSSRAVVMDHDANIVSVSQREFEQIYPKPGWVEHDPMEIWASQSSTLVEVLAKADISSDQIAAIGITNQRETAIVWERETGKPIYNAIVWQCRRTADICEQLKRDGLEDYIRDNTGLVVDPYFSGTKVKWILDHVEGSRERAKRGELLFGTVDTWLIWKMTQGRVHVTDYTNASRTMLFNIHDLDWDDKMLDVLDIPRAMLPQVRKSSEVYGQTNIGGKGGTRIPIAGIAGDQQAALFGQLCVKEGMAKNTYGTGCFMLMNTGEKAVKSENGLLTTIACGPSGEVNYALEGAVFMAGASIQWLRDEMKLISDAFDSEYFATKVKDTNGVYVVPAFTGLGAPYWDPYARGAIFGLTRGVNSNHIIRATLESIAYQTRDVLEAMQADSGIRLHALRVDGGAVANNFLMQFQSDILGTRVERPEVREVTALGAAYLAGLAVGYWQNLDELQEKAVIEREFRPGIETTERNYRYSGWKKAVKRAMAWEEHDK</sequence>
<keyword id="KW-0021">Allosteric enzyme</keyword>
<keyword id="KW-0067">ATP-binding</keyword>
<keyword id="KW-0319">Glycerol metabolism</keyword>
<keyword id="KW-0418">Kinase</keyword>
<keyword id="KW-0479">Metal-binding</keyword>
<keyword id="KW-0547">Nucleotide-binding</keyword>
<keyword id="KW-0808">Transferase</keyword>
<keyword id="KW-0862">Zinc</keyword>
<feature type="chain" id="PRO_1000124201" description="Glycerol kinase">
    <location>
        <begin position="1"/>
        <end position="502"/>
    </location>
</feature>
<feature type="binding site" evidence="1">
    <location>
        <position position="14"/>
    </location>
    <ligand>
        <name>ADP</name>
        <dbReference type="ChEBI" id="CHEBI:456216"/>
    </ligand>
</feature>
<feature type="binding site" evidence="1">
    <location>
        <position position="14"/>
    </location>
    <ligand>
        <name>ATP</name>
        <dbReference type="ChEBI" id="CHEBI:30616"/>
    </ligand>
</feature>
<feature type="binding site" evidence="1">
    <location>
        <position position="14"/>
    </location>
    <ligand>
        <name>sn-glycerol 3-phosphate</name>
        <dbReference type="ChEBI" id="CHEBI:57597"/>
    </ligand>
</feature>
<feature type="binding site" evidence="1">
    <location>
        <position position="15"/>
    </location>
    <ligand>
        <name>ATP</name>
        <dbReference type="ChEBI" id="CHEBI:30616"/>
    </ligand>
</feature>
<feature type="binding site" evidence="1">
    <location>
        <position position="16"/>
    </location>
    <ligand>
        <name>ATP</name>
        <dbReference type="ChEBI" id="CHEBI:30616"/>
    </ligand>
</feature>
<feature type="binding site" evidence="1">
    <location>
        <position position="18"/>
    </location>
    <ligand>
        <name>ADP</name>
        <dbReference type="ChEBI" id="CHEBI:456216"/>
    </ligand>
</feature>
<feature type="binding site" evidence="1">
    <location>
        <position position="84"/>
    </location>
    <ligand>
        <name>glycerol</name>
        <dbReference type="ChEBI" id="CHEBI:17754"/>
    </ligand>
</feature>
<feature type="binding site" evidence="1">
    <location>
        <position position="84"/>
    </location>
    <ligand>
        <name>sn-glycerol 3-phosphate</name>
        <dbReference type="ChEBI" id="CHEBI:57597"/>
    </ligand>
</feature>
<feature type="binding site" evidence="1">
    <location>
        <position position="85"/>
    </location>
    <ligand>
        <name>glycerol</name>
        <dbReference type="ChEBI" id="CHEBI:17754"/>
    </ligand>
</feature>
<feature type="binding site" evidence="1">
    <location>
        <position position="85"/>
    </location>
    <ligand>
        <name>sn-glycerol 3-phosphate</name>
        <dbReference type="ChEBI" id="CHEBI:57597"/>
    </ligand>
</feature>
<feature type="binding site" evidence="1">
    <location>
        <position position="136"/>
    </location>
    <ligand>
        <name>glycerol</name>
        <dbReference type="ChEBI" id="CHEBI:17754"/>
    </ligand>
</feature>
<feature type="binding site" evidence="1">
    <location>
        <position position="136"/>
    </location>
    <ligand>
        <name>sn-glycerol 3-phosphate</name>
        <dbReference type="ChEBI" id="CHEBI:57597"/>
    </ligand>
</feature>
<feature type="binding site" evidence="1">
    <location>
        <position position="246"/>
    </location>
    <ligand>
        <name>glycerol</name>
        <dbReference type="ChEBI" id="CHEBI:17754"/>
    </ligand>
</feature>
<feature type="binding site" evidence="1">
    <location>
        <position position="246"/>
    </location>
    <ligand>
        <name>sn-glycerol 3-phosphate</name>
        <dbReference type="ChEBI" id="CHEBI:57597"/>
    </ligand>
</feature>
<feature type="binding site" evidence="1">
    <location>
        <position position="247"/>
    </location>
    <ligand>
        <name>glycerol</name>
        <dbReference type="ChEBI" id="CHEBI:17754"/>
    </ligand>
</feature>
<feature type="binding site" evidence="1">
    <location>
        <position position="268"/>
    </location>
    <ligand>
        <name>ADP</name>
        <dbReference type="ChEBI" id="CHEBI:456216"/>
    </ligand>
</feature>
<feature type="binding site" evidence="1">
    <location>
        <position position="268"/>
    </location>
    <ligand>
        <name>ATP</name>
        <dbReference type="ChEBI" id="CHEBI:30616"/>
    </ligand>
</feature>
<feature type="binding site" evidence="1">
    <location>
        <position position="311"/>
    </location>
    <ligand>
        <name>ADP</name>
        <dbReference type="ChEBI" id="CHEBI:456216"/>
    </ligand>
</feature>
<feature type="binding site" evidence="1">
    <location>
        <position position="311"/>
    </location>
    <ligand>
        <name>ATP</name>
        <dbReference type="ChEBI" id="CHEBI:30616"/>
    </ligand>
</feature>
<feature type="binding site" evidence="1">
    <location>
        <position position="315"/>
    </location>
    <ligand>
        <name>ATP</name>
        <dbReference type="ChEBI" id="CHEBI:30616"/>
    </ligand>
</feature>
<feature type="binding site" evidence="1">
    <location>
        <position position="412"/>
    </location>
    <ligand>
        <name>ADP</name>
        <dbReference type="ChEBI" id="CHEBI:456216"/>
    </ligand>
</feature>
<feature type="binding site" evidence="1">
    <location>
        <position position="412"/>
    </location>
    <ligand>
        <name>ATP</name>
        <dbReference type="ChEBI" id="CHEBI:30616"/>
    </ligand>
</feature>
<feature type="binding site" evidence="1">
    <location>
        <position position="416"/>
    </location>
    <ligand>
        <name>ADP</name>
        <dbReference type="ChEBI" id="CHEBI:456216"/>
    </ligand>
</feature>
<accession>C0Q436</accession>
<evidence type="ECO:0000255" key="1">
    <source>
        <dbReference type="HAMAP-Rule" id="MF_00186"/>
    </source>
</evidence>
<name>GLPK_SALPC</name>
<reference key="1">
    <citation type="journal article" date="2009" name="PLoS ONE">
        <title>Salmonella paratyphi C: genetic divergence from Salmonella choleraesuis and pathogenic convergence with Salmonella typhi.</title>
        <authorList>
            <person name="Liu W.-Q."/>
            <person name="Feng Y."/>
            <person name="Wang Y."/>
            <person name="Zou Q.-H."/>
            <person name="Chen F."/>
            <person name="Guo J.-T."/>
            <person name="Peng Y.-H."/>
            <person name="Jin Y."/>
            <person name="Li Y.-G."/>
            <person name="Hu S.-N."/>
            <person name="Johnston R.N."/>
            <person name="Liu G.-R."/>
            <person name="Liu S.-L."/>
        </authorList>
    </citation>
    <scope>NUCLEOTIDE SEQUENCE [LARGE SCALE GENOMIC DNA]</scope>
    <source>
        <strain>RKS4594</strain>
    </source>
</reference>
<comment type="function">
    <text evidence="1">Key enzyme in the regulation of glycerol uptake and metabolism. Catalyzes the phosphorylation of glycerol to yield sn-glycerol 3-phosphate.</text>
</comment>
<comment type="catalytic activity">
    <reaction evidence="1">
        <text>glycerol + ATP = sn-glycerol 3-phosphate + ADP + H(+)</text>
        <dbReference type="Rhea" id="RHEA:21644"/>
        <dbReference type="ChEBI" id="CHEBI:15378"/>
        <dbReference type="ChEBI" id="CHEBI:17754"/>
        <dbReference type="ChEBI" id="CHEBI:30616"/>
        <dbReference type="ChEBI" id="CHEBI:57597"/>
        <dbReference type="ChEBI" id="CHEBI:456216"/>
        <dbReference type="EC" id="2.7.1.30"/>
    </reaction>
</comment>
<comment type="activity regulation">
    <text evidence="1">Activity of this regulatory enzyme is affected by several metabolites. Allosterically and non-competitively inhibited by fructose 1,6-bisphosphate (FBP) and unphosphorylated phosphocarrier protein EIIA-Glc (III-Glc), an integral component of the bacterial phosphotransferase (PTS) system.</text>
</comment>
<comment type="pathway">
    <text evidence="1">Polyol metabolism; glycerol degradation via glycerol kinase pathway; sn-glycerol 3-phosphate from glycerol: step 1/1.</text>
</comment>
<comment type="subunit">
    <text evidence="1">Homotetramer and homodimer (in equilibrium). Heterodimer with EIIA-Glc. Binds 1 zinc ion per glycerol kinase EIIA-Glc dimer. The zinc ion is important for dimerization.</text>
</comment>
<comment type="similarity">
    <text evidence="1">Belongs to the FGGY kinase family.</text>
</comment>
<protein>
    <recommendedName>
        <fullName evidence="1">Glycerol kinase</fullName>
        <ecNumber evidence="1">2.7.1.30</ecNumber>
    </recommendedName>
    <alternativeName>
        <fullName evidence="1">ATP:glycerol 3-phosphotransferase</fullName>
    </alternativeName>
    <alternativeName>
        <fullName evidence="1">Glycerokinase</fullName>
        <shortName evidence="1">GK</shortName>
    </alternativeName>
</protein>